<keyword id="KW-0119">Carbohydrate metabolism</keyword>
<keyword id="KW-0963">Cytoplasm</keyword>
<keyword id="KW-0378">Hydrolase</keyword>
<keyword id="KW-0460">Magnesium</keyword>
<keyword id="KW-0479">Metal-binding</keyword>
<keyword id="KW-1185">Reference proteome</keyword>
<name>F16PA_CYTH3</name>
<dbReference type="EC" id="3.1.3.11" evidence="1"/>
<dbReference type="EMBL" id="CP000383">
    <property type="protein sequence ID" value="ABG60142.1"/>
    <property type="molecule type" value="Genomic_DNA"/>
</dbReference>
<dbReference type="RefSeq" id="WP_011586252.1">
    <property type="nucleotide sequence ID" value="NC_008255.1"/>
</dbReference>
<dbReference type="SMR" id="Q11R22"/>
<dbReference type="STRING" id="269798.CHU_2896"/>
<dbReference type="KEGG" id="chu:CHU_2896"/>
<dbReference type="eggNOG" id="COG0158">
    <property type="taxonomic scope" value="Bacteria"/>
</dbReference>
<dbReference type="HOGENOM" id="CLU_039977_2_2_10"/>
<dbReference type="OrthoDB" id="9806756at2"/>
<dbReference type="UniPathway" id="UPA00138"/>
<dbReference type="Proteomes" id="UP000001822">
    <property type="component" value="Chromosome"/>
</dbReference>
<dbReference type="GO" id="GO:0005829">
    <property type="term" value="C:cytosol"/>
    <property type="evidence" value="ECO:0007669"/>
    <property type="project" value="TreeGrafter"/>
</dbReference>
<dbReference type="GO" id="GO:0042132">
    <property type="term" value="F:fructose 1,6-bisphosphate 1-phosphatase activity"/>
    <property type="evidence" value="ECO:0007669"/>
    <property type="project" value="UniProtKB-UniRule"/>
</dbReference>
<dbReference type="GO" id="GO:0000287">
    <property type="term" value="F:magnesium ion binding"/>
    <property type="evidence" value="ECO:0007669"/>
    <property type="project" value="UniProtKB-UniRule"/>
</dbReference>
<dbReference type="GO" id="GO:0030388">
    <property type="term" value="P:fructose 1,6-bisphosphate metabolic process"/>
    <property type="evidence" value="ECO:0007669"/>
    <property type="project" value="TreeGrafter"/>
</dbReference>
<dbReference type="GO" id="GO:0006002">
    <property type="term" value="P:fructose 6-phosphate metabolic process"/>
    <property type="evidence" value="ECO:0007669"/>
    <property type="project" value="TreeGrafter"/>
</dbReference>
<dbReference type="GO" id="GO:0006000">
    <property type="term" value="P:fructose metabolic process"/>
    <property type="evidence" value="ECO:0007669"/>
    <property type="project" value="TreeGrafter"/>
</dbReference>
<dbReference type="GO" id="GO:0006094">
    <property type="term" value="P:gluconeogenesis"/>
    <property type="evidence" value="ECO:0007669"/>
    <property type="project" value="UniProtKB-UniRule"/>
</dbReference>
<dbReference type="GO" id="GO:0005986">
    <property type="term" value="P:sucrose biosynthetic process"/>
    <property type="evidence" value="ECO:0007669"/>
    <property type="project" value="TreeGrafter"/>
</dbReference>
<dbReference type="CDD" id="cd00354">
    <property type="entry name" value="FBPase"/>
    <property type="match status" value="1"/>
</dbReference>
<dbReference type="FunFam" id="3.30.540.10:FF:000002">
    <property type="entry name" value="Fructose-1,6-bisphosphatase class 1"/>
    <property type="match status" value="1"/>
</dbReference>
<dbReference type="FunFam" id="3.40.190.80:FF:000001">
    <property type="entry name" value="Fructose-1,6-bisphosphatase class 1"/>
    <property type="match status" value="1"/>
</dbReference>
<dbReference type="Gene3D" id="3.40.190.80">
    <property type="match status" value="1"/>
</dbReference>
<dbReference type="Gene3D" id="3.30.540.10">
    <property type="entry name" value="Fructose-1,6-Bisphosphatase, subunit A, domain 1"/>
    <property type="match status" value="1"/>
</dbReference>
<dbReference type="HAMAP" id="MF_01855">
    <property type="entry name" value="FBPase_class1"/>
    <property type="match status" value="1"/>
</dbReference>
<dbReference type="InterPro" id="IPR044015">
    <property type="entry name" value="FBPase_C_dom"/>
</dbReference>
<dbReference type="InterPro" id="IPR000146">
    <property type="entry name" value="FBPase_class-1"/>
</dbReference>
<dbReference type="InterPro" id="IPR033391">
    <property type="entry name" value="FBPase_N"/>
</dbReference>
<dbReference type="InterPro" id="IPR028343">
    <property type="entry name" value="FBPtase"/>
</dbReference>
<dbReference type="NCBIfam" id="NF006778">
    <property type="entry name" value="PRK09293.1-1"/>
    <property type="match status" value="1"/>
</dbReference>
<dbReference type="NCBIfam" id="NF006779">
    <property type="entry name" value="PRK09293.1-3"/>
    <property type="match status" value="1"/>
</dbReference>
<dbReference type="PANTHER" id="PTHR11556">
    <property type="entry name" value="FRUCTOSE-1,6-BISPHOSPHATASE-RELATED"/>
    <property type="match status" value="1"/>
</dbReference>
<dbReference type="PANTHER" id="PTHR11556:SF35">
    <property type="entry name" value="SEDOHEPTULOSE-1,7-BISPHOSPHATASE, CHLOROPLASTIC"/>
    <property type="match status" value="1"/>
</dbReference>
<dbReference type="Pfam" id="PF00316">
    <property type="entry name" value="FBPase"/>
    <property type="match status" value="1"/>
</dbReference>
<dbReference type="Pfam" id="PF18913">
    <property type="entry name" value="FBPase_C"/>
    <property type="match status" value="1"/>
</dbReference>
<dbReference type="PIRSF" id="PIRSF500210">
    <property type="entry name" value="FBPtase"/>
    <property type="match status" value="1"/>
</dbReference>
<dbReference type="PIRSF" id="PIRSF000904">
    <property type="entry name" value="FBPtase_SBPase"/>
    <property type="match status" value="1"/>
</dbReference>
<dbReference type="PRINTS" id="PR00115">
    <property type="entry name" value="F16BPHPHTASE"/>
</dbReference>
<dbReference type="SUPFAM" id="SSF56655">
    <property type="entry name" value="Carbohydrate phosphatase"/>
    <property type="match status" value="1"/>
</dbReference>
<evidence type="ECO:0000255" key="1">
    <source>
        <dbReference type="HAMAP-Rule" id="MF_01855"/>
    </source>
</evidence>
<accession>Q11R22</accession>
<sequence>MERNLSTVKTLVQFITESQKHVFGASGDLSKILNDIAVAAKIINREVNKAGLLDILGMEGGMNVQNEEVKKLDVYANDQFISALRSGGQCCAIASEENTDIIPIENNGHSKSNYVVLIDPLDGSSNIDVNVAIGSIFSIYRRVSESGPGETVDCMQVGNKQVAAGYIIYGSSTMMVYTTGDGVNGFTLDPSIGEFCLSHPNLKIPEDGFIYSVNEGNYADFPREIQEYIYYCKTPDFETSRPYSSRYIGSMVADFHRNLIKGGIFMYPATAKYPLGKLRLMYECNPLAFIVEQAGGKAIDGEGRILDIEPTNIHQRTGIIIGSKNMVEKVEAFIQMNVGLNVYRLK</sequence>
<feature type="chain" id="PRO_0000364533" description="Fructose-1,6-bisphosphatase class 1">
    <location>
        <begin position="1"/>
        <end position="346"/>
    </location>
</feature>
<feature type="binding site" evidence="1">
    <location>
        <position position="96"/>
    </location>
    <ligand>
        <name>Mg(2+)</name>
        <dbReference type="ChEBI" id="CHEBI:18420"/>
        <label>1</label>
    </ligand>
</feature>
<feature type="binding site" evidence="1">
    <location>
        <position position="119"/>
    </location>
    <ligand>
        <name>Mg(2+)</name>
        <dbReference type="ChEBI" id="CHEBI:18420"/>
        <label>1</label>
    </ligand>
</feature>
<feature type="binding site" evidence="1">
    <location>
        <position position="119"/>
    </location>
    <ligand>
        <name>Mg(2+)</name>
        <dbReference type="ChEBI" id="CHEBI:18420"/>
        <label>2</label>
    </ligand>
</feature>
<feature type="binding site" evidence="1">
    <location>
        <position position="121"/>
    </location>
    <ligand>
        <name>Mg(2+)</name>
        <dbReference type="ChEBI" id="CHEBI:18420"/>
        <label>1</label>
    </ligand>
</feature>
<feature type="binding site" evidence="1">
    <location>
        <begin position="122"/>
        <end position="125"/>
    </location>
    <ligand>
        <name>substrate</name>
    </ligand>
</feature>
<feature type="binding site" evidence="1">
    <location>
        <position position="122"/>
    </location>
    <ligand>
        <name>Mg(2+)</name>
        <dbReference type="ChEBI" id="CHEBI:18420"/>
        <label>2</label>
    </ligand>
</feature>
<feature type="binding site" evidence="1">
    <location>
        <position position="214"/>
    </location>
    <ligand>
        <name>substrate</name>
    </ligand>
</feature>
<feature type="binding site" evidence="1">
    <location>
        <position position="247"/>
    </location>
    <ligand>
        <name>substrate</name>
    </ligand>
</feature>
<feature type="binding site" evidence="1">
    <location>
        <position position="277"/>
    </location>
    <ligand>
        <name>substrate</name>
    </ligand>
</feature>
<feature type="binding site" evidence="1">
    <location>
        <position position="283"/>
    </location>
    <ligand>
        <name>Mg(2+)</name>
        <dbReference type="ChEBI" id="CHEBI:18420"/>
        <label>2</label>
    </ligand>
</feature>
<reference key="1">
    <citation type="journal article" date="2007" name="Appl. Environ. Microbiol.">
        <title>Genome sequence of the cellulolytic gliding bacterium Cytophaga hutchinsonii.</title>
        <authorList>
            <person name="Xie G."/>
            <person name="Bruce D.C."/>
            <person name="Challacombe J.F."/>
            <person name="Chertkov O."/>
            <person name="Detter J.C."/>
            <person name="Gilna P."/>
            <person name="Han C.S."/>
            <person name="Lucas S."/>
            <person name="Misra M."/>
            <person name="Myers G.L."/>
            <person name="Richardson P."/>
            <person name="Tapia R."/>
            <person name="Thayer N."/>
            <person name="Thompson L.S."/>
            <person name="Brettin T.S."/>
            <person name="Henrissat B."/>
            <person name="Wilson D.B."/>
            <person name="McBride M.J."/>
        </authorList>
    </citation>
    <scope>NUCLEOTIDE SEQUENCE [LARGE SCALE GENOMIC DNA]</scope>
    <source>
        <strain>ATCC 33406 / DSM 1761 / JCM 20678 / CIP 103989 / IAM 12607 / NBRC 15051 / NCIMB 9469 / D465</strain>
    </source>
</reference>
<protein>
    <recommendedName>
        <fullName evidence="1">Fructose-1,6-bisphosphatase class 1</fullName>
        <shortName evidence="1">FBPase class 1</shortName>
        <ecNumber evidence="1">3.1.3.11</ecNumber>
    </recommendedName>
    <alternativeName>
        <fullName evidence="1">D-fructose-1,6-bisphosphate 1-phosphohydrolase class 1</fullName>
    </alternativeName>
</protein>
<proteinExistence type="inferred from homology"/>
<organism>
    <name type="scientific">Cytophaga hutchinsonii (strain ATCC 33406 / DSM 1761 / CIP 103989 / NBRC 15051 / NCIMB 9469 / D465)</name>
    <dbReference type="NCBI Taxonomy" id="269798"/>
    <lineage>
        <taxon>Bacteria</taxon>
        <taxon>Pseudomonadati</taxon>
        <taxon>Bacteroidota</taxon>
        <taxon>Cytophagia</taxon>
        <taxon>Cytophagales</taxon>
        <taxon>Cytophagaceae</taxon>
        <taxon>Cytophaga</taxon>
    </lineage>
</organism>
<gene>
    <name evidence="1" type="primary">fbp</name>
    <name type="ordered locus">CHU_2896</name>
</gene>
<comment type="catalytic activity">
    <reaction evidence="1">
        <text>beta-D-fructose 1,6-bisphosphate + H2O = beta-D-fructose 6-phosphate + phosphate</text>
        <dbReference type="Rhea" id="RHEA:11064"/>
        <dbReference type="ChEBI" id="CHEBI:15377"/>
        <dbReference type="ChEBI" id="CHEBI:32966"/>
        <dbReference type="ChEBI" id="CHEBI:43474"/>
        <dbReference type="ChEBI" id="CHEBI:57634"/>
        <dbReference type="EC" id="3.1.3.11"/>
    </reaction>
</comment>
<comment type="cofactor">
    <cofactor evidence="1">
        <name>Mg(2+)</name>
        <dbReference type="ChEBI" id="CHEBI:18420"/>
    </cofactor>
    <text evidence="1">Binds 2 magnesium ions per subunit.</text>
</comment>
<comment type="pathway">
    <text evidence="1">Carbohydrate biosynthesis; gluconeogenesis.</text>
</comment>
<comment type="subunit">
    <text evidence="1">Homotetramer.</text>
</comment>
<comment type="subcellular location">
    <subcellularLocation>
        <location evidence="1">Cytoplasm</location>
    </subcellularLocation>
</comment>
<comment type="similarity">
    <text evidence="1">Belongs to the FBPase class 1 family.</text>
</comment>